<keyword id="KW-0903">Direct protein sequencing</keyword>
<keyword id="KW-1015">Disulfide bond</keyword>
<keyword id="KW-0872">Ion channel impairing toxin</keyword>
<keyword id="KW-0528">Neurotoxin</keyword>
<keyword id="KW-0632">Potassium channel impairing toxin</keyword>
<keyword id="KW-0638">Presynaptic neurotoxin</keyword>
<keyword id="KW-0964">Secreted</keyword>
<keyword id="KW-0732">Signal</keyword>
<keyword id="KW-0800">Toxin</keyword>
<keyword id="KW-1220">Voltage-gated potassium channel impairing toxin</keyword>
<evidence type="ECO:0000250" key="1"/>
<evidence type="ECO:0000255" key="2">
    <source>
        <dbReference type="PROSITE-ProRule" id="PRU00031"/>
    </source>
</evidence>
<evidence type="ECO:0000269" key="3">
    <source>
    </source>
</evidence>
<evidence type="ECO:0000269" key="4">
    <source>
    </source>
</evidence>
<evidence type="ECO:0000269" key="5">
    <source>
    </source>
</evidence>
<evidence type="ECO:0000269" key="6">
    <source>
    </source>
</evidence>
<evidence type="ECO:0000305" key="7"/>
<comment type="function">
    <text evidence="1 6">Beta-1-bungarotoxin is a presynaptic neurotoxin of the venom. The B chain is homologous to venom basic protease inhibitors but has no protease inhibitor activity and blocks voltage-gated potassium channels (Kv) (By similarity).</text>
</comment>
<comment type="subunit">
    <text evidence="4">Heterodimer; disulfide-linked. The A chains have phospholipase A2 activity and the B chains show homology with the basic protease inhibitors.</text>
</comment>
<comment type="subcellular location">
    <subcellularLocation>
        <location>Secreted</location>
    </subcellularLocation>
</comment>
<comment type="tissue specificity">
    <text>Expressed by the venom gland.</text>
</comment>
<comment type="similarity">
    <text evidence="7">Belongs to the venom Kunitz-type family.</text>
</comment>
<dbReference type="EMBL" id="Y12100">
    <property type="protein sequence ID" value="CAA72809.1"/>
    <property type="molecule type" value="mRNA"/>
</dbReference>
<dbReference type="EMBL" id="AJ251223">
    <property type="protein sequence ID" value="CAB62503.1"/>
    <property type="molecule type" value="Genomic_DNA"/>
</dbReference>
<dbReference type="PIR" id="A01219">
    <property type="entry name" value="TIKFBY"/>
</dbReference>
<dbReference type="SMR" id="P00987"/>
<dbReference type="MEROPS" id="I02.978"/>
<dbReference type="GO" id="GO:0005615">
    <property type="term" value="C:extracellular space"/>
    <property type="evidence" value="ECO:0007669"/>
    <property type="project" value="TreeGrafter"/>
</dbReference>
<dbReference type="GO" id="GO:0015459">
    <property type="term" value="F:potassium channel regulator activity"/>
    <property type="evidence" value="ECO:0007669"/>
    <property type="project" value="UniProtKB-KW"/>
</dbReference>
<dbReference type="GO" id="GO:0004867">
    <property type="term" value="F:serine-type endopeptidase inhibitor activity"/>
    <property type="evidence" value="ECO:0007669"/>
    <property type="project" value="InterPro"/>
</dbReference>
<dbReference type="GO" id="GO:0090729">
    <property type="term" value="F:toxin activity"/>
    <property type="evidence" value="ECO:0007669"/>
    <property type="project" value="UniProtKB-KW"/>
</dbReference>
<dbReference type="CDD" id="cd22619">
    <property type="entry name" value="Kunitz_B2B"/>
    <property type="match status" value="1"/>
</dbReference>
<dbReference type="Gene3D" id="4.10.410.10">
    <property type="entry name" value="Pancreatic trypsin inhibitor Kunitz domain"/>
    <property type="match status" value="1"/>
</dbReference>
<dbReference type="InterPro" id="IPR002223">
    <property type="entry name" value="Kunitz_BPTI"/>
</dbReference>
<dbReference type="InterPro" id="IPR036880">
    <property type="entry name" value="Kunitz_BPTI_sf"/>
</dbReference>
<dbReference type="InterPro" id="IPR020901">
    <property type="entry name" value="Prtase_inh_Kunz-CS"/>
</dbReference>
<dbReference type="InterPro" id="IPR050098">
    <property type="entry name" value="TFPI/VKTCI-like"/>
</dbReference>
<dbReference type="PANTHER" id="PTHR10083:SF374">
    <property type="entry name" value="BPTI_KUNITZ INHIBITOR DOMAIN-CONTAINING PROTEIN"/>
    <property type="match status" value="1"/>
</dbReference>
<dbReference type="PANTHER" id="PTHR10083">
    <property type="entry name" value="KUNITZ-TYPE PROTEASE INHIBITOR-RELATED"/>
    <property type="match status" value="1"/>
</dbReference>
<dbReference type="Pfam" id="PF00014">
    <property type="entry name" value="Kunitz_BPTI"/>
    <property type="match status" value="1"/>
</dbReference>
<dbReference type="PRINTS" id="PR00759">
    <property type="entry name" value="BASICPTASE"/>
</dbReference>
<dbReference type="SMART" id="SM00131">
    <property type="entry name" value="KU"/>
    <property type="match status" value="1"/>
</dbReference>
<dbReference type="SUPFAM" id="SSF57362">
    <property type="entry name" value="BPTI-like"/>
    <property type="match status" value="1"/>
</dbReference>
<dbReference type="PROSITE" id="PS00280">
    <property type="entry name" value="BPTI_KUNITZ_1"/>
    <property type="match status" value="1"/>
</dbReference>
<dbReference type="PROSITE" id="PS50279">
    <property type="entry name" value="BPTI_KUNITZ_2"/>
    <property type="match status" value="1"/>
</dbReference>
<name>VKTH1_BUNMU</name>
<reference key="1">
    <citation type="journal article" date="1998" name="Biochem. J.">
        <title>Cloning and functional expression of B chains of beta-bungarotoxins from Bungarus multicinctus (Taiwan banded krait).</title>
        <authorList>
            <person name="Wu P.-F."/>
            <person name="Wu S.-N."/>
            <person name="Chang C.-C."/>
            <person name="Chang L.-S."/>
        </authorList>
    </citation>
    <scope>NUCLEOTIDE SEQUENCE [MRNA]</scope>
    <scope>FUNCTION</scope>
    <source>
        <tissue>Venom gland</tissue>
    </source>
</reference>
<reference key="2">
    <citation type="journal article" date="2000" name="Eur. J. Biochem.">
        <title>Genetic organization of A chain and B chain of beta-bungarotoxin from Taiwan banded krait (Bungarus multicinctus). A chain genes and B chain genes do not share a common origin.</title>
        <authorList>
            <person name="Wu P.-F."/>
            <person name="Chang L.-S."/>
        </authorList>
    </citation>
    <scope>NUCLEOTIDE SEQUENCE [GENOMIC DNA]</scope>
    <source>
        <tissue>Liver</tissue>
    </source>
</reference>
<reference key="3">
    <citation type="journal article" date="1978" name="J. Biochem.">
        <title>Amino acid sequences of the two polypeptide chains in beta1-bungarotoxin from the venom of Bungarus multicinctus.</title>
        <authorList>
            <person name="Kondo K."/>
            <person name="Narita K."/>
            <person name="Lee C.-Y."/>
        </authorList>
    </citation>
    <scope>PROTEIN SEQUENCE OF 25-85</scope>
    <source>
        <tissue>Venom</tissue>
    </source>
</reference>
<reference key="4">
    <citation type="journal article" date="2001" name="J. Protein Chem.">
        <title>Expression of A chain and B chain of beta-bungarotoxin from taiwan banded krait: the functional implication of the interchain disulfide bond between A chain and B chain.</title>
        <authorList>
            <person name="Wu P.-F."/>
            <person name="Chang L.-S."/>
        </authorList>
    </citation>
    <scope>MUTAGENESIS OF CYS-79</scope>
</reference>
<reference key="5">
    <citation type="journal article" date="2006" name="Toxicon">
        <title>Divergence of genes encoding B chains of beta-bungarotoxins.</title>
        <authorList>
            <person name="Cheng Y.-C."/>
            <person name="Chen K.-C."/>
            <person name="Lin S.-K."/>
            <person name="Chang L.-S."/>
        </authorList>
    </citation>
    <scope>SUBUNIT</scope>
    <source>
        <tissue>Venom</tissue>
    </source>
</reference>
<organism>
    <name type="scientific">Bungarus multicinctus</name>
    <name type="common">Many-banded krait</name>
    <dbReference type="NCBI Taxonomy" id="8616"/>
    <lineage>
        <taxon>Eukaryota</taxon>
        <taxon>Metazoa</taxon>
        <taxon>Chordata</taxon>
        <taxon>Craniata</taxon>
        <taxon>Vertebrata</taxon>
        <taxon>Euteleostomi</taxon>
        <taxon>Lepidosauria</taxon>
        <taxon>Squamata</taxon>
        <taxon>Bifurcata</taxon>
        <taxon>Unidentata</taxon>
        <taxon>Episquamata</taxon>
        <taxon>Toxicofera</taxon>
        <taxon>Serpentes</taxon>
        <taxon>Colubroidea</taxon>
        <taxon>Elapidae</taxon>
        <taxon>Bungarinae</taxon>
        <taxon>Bungarus</taxon>
    </lineage>
</organism>
<proteinExistence type="evidence at protein level"/>
<accession>P00987</accession>
<accession>O42298</accession>
<accession>P00988</accession>
<accession>Q9PTA4</accession>
<protein>
    <recommendedName>
        <fullName>Kunitz-type serine protease inhibitor homolog beta-bungarotoxin B1 chain, major component</fullName>
    </recommendedName>
    <alternativeName>
        <fullName>Beta-1-bungarotoxin</fullName>
    </alternativeName>
</protein>
<feature type="signal peptide" evidence="5">
    <location>
        <begin position="1"/>
        <end position="24"/>
    </location>
</feature>
<feature type="chain" id="PRO_0000016863" description="Kunitz-type serine protease inhibitor homolog beta-bungarotoxin B1 chain, major component">
    <location>
        <begin position="25"/>
        <end position="85"/>
    </location>
</feature>
<feature type="domain" description="BPTI/Kunitz inhibitor" evidence="2">
    <location>
        <begin position="31"/>
        <end position="81"/>
    </location>
</feature>
<feature type="disulfide bond" evidence="2">
    <location>
        <begin position="31"/>
        <end position="81"/>
    </location>
</feature>
<feature type="disulfide bond" evidence="2">
    <location>
        <begin position="40"/>
        <end position="64"/>
    </location>
</feature>
<feature type="disulfide bond" evidence="2">
    <location>
        <begin position="56"/>
        <end position="77"/>
    </location>
</feature>
<feature type="disulfide bond" description="Interchain (with an A chain)">
    <location>
        <position position="79"/>
    </location>
</feature>
<feature type="mutagenesis site" description="Loss of PA2 activity. Weak loss in folding." evidence="3">
    <original>C</original>
    <variation>S</variation>
    <location>
        <position position="79"/>
    </location>
</feature>
<feature type="sequence conflict" description="In Ref. 2; CAB62503." evidence="7" ref="2">
    <original>C</original>
    <variation>S</variation>
    <location>
        <position position="16"/>
    </location>
</feature>
<feature type="sequence conflict" description="In Ref. 3; AA sequence." evidence="7" ref="3">
    <location>
        <position position="45"/>
    </location>
</feature>
<feature type="sequence conflict" description="In Ref. 3; AA sequence." evidence="7" ref="3">
    <original>NGNGNH</original>
    <variation>DGDHGN</variation>
    <location>
        <begin position="65"/>
        <end position="70"/>
    </location>
</feature>
<sequence length="85" mass="9571">MSSGGLLLLLGLLTLCAELIPVSSRQRHRDCDKPPDKGNCGPVRRAFYYDTRLKTCKAFQYRGCNGNGNHFKTETLCRCECLVYP</sequence>